<dbReference type="SMR" id="P86291"/>
<dbReference type="GO" id="GO:0005576">
    <property type="term" value="C:extracellular region"/>
    <property type="evidence" value="ECO:0007669"/>
    <property type="project" value="UniProtKB-SubCell"/>
</dbReference>
<dbReference type="GO" id="GO:0042742">
    <property type="term" value="P:defense response to bacterium"/>
    <property type="evidence" value="ECO:0007669"/>
    <property type="project" value="UniProtKB-KW"/>
</dbReference>
<dbReference type="GO" id="GO:0031640">
    <property type="term" value="P:killing of cells of another organism"/>
    <property type="evidence" value="ECO:0007669"/>
    <property type="project" value="UniProtKB-KW"/>
</dbReference>
<dbReference type="Gene3D" id="1.20.5.130">
    <property type="match status" value="1"/>
</dbReference>
<dbReference type="InterPro" id="IPR002633">
    <property type="entry name" value="Bacteriocin_IIa"/>
</dbReference>
<dbReference type="InterPro" id="IPR023384">
    <property type="entry name" value="Bacteriocin_IIa_CS"/>
</dbReference>
<dbReference type="InterPro" id="IPR023388">
    <property type="entry name" value="Bacteriocin_IIa_dom_sf"/>
</dbReference>
<dbReference type="Pfam" id="PF01721">
    <property type="entry name" value="Bacteriocin_II"/>
    <property type="match status" value="1"/>
</dbReference>
<dbReference type="PROSITE" id="PS60030">
    <property type="entry name" value="BACTERIOCIN_IIA"/>
    <property type="match status" value="1"/>
</dbReference>
<proteinExistence type="evidence at protein level"/>
<sequence length="41" mass="4602">TSYGNGVHCNKSKCWIDVSELETYKAGTVSNPKDILWSLKE</sequence>
<name>BACT_LACSP</name>
<reference evidence="5" key="1">
    <citation type="submission" date="2009-04" db="UniProtKB">
        <title>Molecular characterisation of bacteriocin from microflora associated with radish and ginger.</title>
        <authorList>
            <person name="Ingale A.G."/>
        </authorList>
    </citation>
    <scope>PROTEIN SEQUENCE</scope>
    <scope>FUNCTION</scope>
    <scope>MASS SPECTROMETRY</scope>
    <source>
        <strain evidence="3">M rad 1</strain>
    </source>
</reference>
<protein>
    <recommendedName>
        <fullName evidence="4">Bacteriocin</fullName>
    </recommendedName>
</protein>
<evidence type="ECO:0000250" key="1">
    <source>
        <dbReference type="UniProtKB" id="P83002"/>
    </source>
</evidence>
<evidence type="ECO:0000255" key="2"/>
<evidence type="ECO:0000269" key="3">
    <source ref="1"/>
</evidence>
<evidence type="ECO:0000303" key="4">
    <source ref="1"/>
</evidence>
<evidence type="ECO:0000305" key="5"/>
<keyword id="KW-0044">Antibiotic</keyword>
<keyword id="KW-0929">Antimicrobial</keyword>
<keyword id="KW-0078">Bacteriocin</keyword>
<keyword id="KW-0903">Direct protein sequencing</keyword>
<keyword id="KW-1015">Disulfide bond</keyword>
<keyword id="KW-0964">Secreted</keyword>
<accession>P86291</accession>
<organism>
    <name type="scientific">Lactococcus sp</name>
    <dbReference type="NCBI Taxonomy" id="44273"/>
    <lineage>
        <taxon>Bacteria</taxon>
        <taxon>Bacillati</taxon>
        <taxon>Bacillota</taxon>
        <taxon>Bacilli</taxon>
        <taxon>Lactobacillales</taxon>
        <taxon>Streptococcaceae</taxon>
        <taxon>Lactococcus</taxon>
    </lineage>
</organism>
<comment type="function">
    <text evidence="3">Bacteriocin active against S.aureus, S.typhi, B.thuringiensis, Klebsiella sp., E.coli KL16 and E.coli Gj137.</text>
</comment>
<comment type="subcellular location">
    <subcellularLocation>
        <location evidence="5">Secreted</location>
    </subcellularLocation>
</comment>
<comment type="mass spectrometry" mass="4223.0" error="10.0" method="MALDI" evidence="3"/>
<comment type="similarity">
    <text evidence="2">Belongs to the bacteriocin class IIA/YGNGV family.</text>
</comment>
<feature type="peptide" id="PRO_0000377704" description="Bacteriocin" evidence="3">
    <location>
        <begin position="1"/>
        <end position="41"/>
    </location>
</feature>
<feature type="disulfide bond" evidence="1">
    <location>
        <begin position="9"/>
        <end position="14"/>
    </location>
</feature>